<comment type="function">
    <text evidence="1">Receptor for hyaluronate.</text>
</comment>
<comment type="subunit">
    <text evidence="1 4">Interacts with TLN1 (By similarity). Interacts with NF2 and RDX.</text>
</comment>
<comment type="subcellular location">
    <subcellularLocation>
        <location evidence="6">Membrane</location>
        <topology evidence="6">Single-pass type I membrane protein</topology>
    </subcellularLocation>
    <text evidence="1">Colocalizes with TLN1 at the membrane ruffles.</text>
</comment>
<comment type="alternative products">
    <event type="alternative splicing"/>
    <isoform>
        <id>Q8C351-1</id>
        <name>1</name>
        <sequence type="displayed"/>
    </isoform>
    <isoform>
        <id>Q8C351-2</id>
        <name>2</name>
        <sequence type="described" ref="VSP_021782 VSP_021783"/>
    </isoform>
</comment>
<comment type="domain">
    <text>The C-terminal domain interacts with the N-terminal domain of RDX.</text>
</comment>
<dbReference type="EMBL" id="AK086930">
    <property type="protein sequence ID" value="BAC39765.2"/>
    <property type="molecule type" value="mRNA"/>
</dbReference>
<dbReference type="EMBL" id="AK165695">
    <property type="protein sequence ID" value="BAE38343.1"/>
    <property type="molecule type" value="mRNA"/>
</dbReference>
<dbReference type="EMBL" id="AC119831">
    <property type="status" value="NOT_ANNOTATED_CDS"/>
    <property type="molecule type" value="Genomic_DNA"/>
</dbReference>
<dbReference type="CCDS" id="CCDS52791.1">
    <molecule id="Q8C351-1"/>
</dbReference>
<dbReference type="RefSeq" id="NP_001028706.1">
    <molecule id="Q8C351-1"/>
    <property type="nucleotide sequence ID" value="NM_001033534.1"/>
</dbReference>
<dbReference type="PDB" id="2K00">
    <property type="method" value="NMR"/>
    <property type="chains" value="B=367-381"/>
</dbReference>
<dbReference type="PDBsum" id="2K00"/>
<dbReference type="SMR" id="Q8C351"/>
<dbReference type="ELM" id="Q8C351"/>
<dbReference type="FunCoup" id="Q8C351">
    <property type="interactions" value="25"/>
</dbReference>
<dbReference type="STRING" id="10090.ENSMUSP00000096379"/>
<dbReference type="GlyCosmos" id="Q8C351">
    <property type="glycosylation" value="1 site, No reported glycans"/>
</dbReference>
<dbReference type="GlyGen" id="Q8C351">
    <property type="glycosylation" value="2 sites"/>
</dbReference>
<dbReference type="iPTMnet" id="Q8C351"/>
<dbReference type="PhosphoSitePlus" id="Q8C351"/>
<dbReference type="jPOST" id="Q8C351"/>
<dbReference type="PaxDb" id="10090-ENSMUSP00000096379"/>
<dbReference type="PeptideAtlas" id="Q8C351"/>
<dbReference type="ProteomicsDB" id="264843">
    <molecule id="Q8C351-1"/>
</dbReference>
<dbReference type="ProteomicsDB" id="264844">
    <molecule id="Q8C351-2"/>
</dbReference>
<dbReference type="Pumba" id="Q8C351"/>
<dbReference type="Antibodypedia" id="32045">
    <property type="antibodies" value="363 antibodies from 27 providers"/>
</dbReference>
<dbReference type="Ensembl" id="ENSMUST00000098782.4">
    <molecule id="Q8C351-1"/>
    <property type="protein sequence ID" value="ENSMUSP00000096379.4"/>
    <property type="gene ID" value="ENSMUSG00000060594.7"/>
</dbReference>
<dbReference type="GeneID" id="244864"/>
<dbReference type="KEGG" id="mmu:244864"/>
<dbReference type="UCSC" id="uc012gtc.1">
    <molecule id="Q8C351-1"/>
    <property type="organism name" value="mouse"/>
</dbReference>
<dbReference type="AGR" id="MGI:2685357"/>
<dbReference type="CTD" id="143903"/>
<dbReference type="MGI" id="MGI:2685357">
    <property type="gene designation" value="Layn"/>
</dbReference>
<dbReference type="VEuPathDB" id="HostDB:ENSMUSG00000060594"/>
<dbReference type="eggNOG" id="KOG4297">
    <property type="taxonomic scope" value="Eukaryota"/>
</dbReference>
<dbReference type="GeneTree" id="ENSGT00390000001844"/>
<dbReference type="HOGENOM" id="CLU_045492_1_1_1"/>
<dbReference type="InParanoid" id="Q8C351"/>
<dbReference type="OMA" id="WVWIYRK"/>
<dbReference type="OrthoDB" id="5797898at2759"/>
<dbReference type="PhylomeDB" id="Q8C351"/>
<dbReference type="TreeFam" id="TF330715"/>
<dbReference type="BioGRID-ORCS" id="244864">
    <property type="hits" value="0 hits in 77 CRISPR screens"/>
</dbReference>
<dbReference type="ChiTaRS" id="Layn">
    <property type="organism name" value="mouse"/>
</dbReference>
<dbReference type="PRO" id="PR:Q8C351"/>
<dbReference type="Proteomes" id="UP000000589">
    <property type="component" value="Chromosome 9"/>
</dbReference>
<dbReference type="RNAct" id="Q8C351">
    <property type="molecule type" value="protein"/>
</dbReference>
<dbReference type="Bgee" id="ENSMUSG00000060594">
    <property type="expression patterns" value="Expressed in aortic valve and 115 other cell types or tissues"/>
</dbReference>
<dbReference type="ExpressionAtlas" id="Q8C351">
    <property type="expression patterns" value="baseline and differential"/>
</dbReference>
<dbReference type="GO" id="GO:0009986">
    <property type="term" value="C:cell surface"/>
    <property type="evidence" value="ECO:0000250"/>
    <property type="project" value="HGNC-UCL"/>
</dbReference>
<dbReference type="GO" id="GO:0016020">
    <property type="term" value="C:membrane"/>
    <property type="evidence" value="ECO:0007669"/>
    <property type="project" value="UniProtKB-SubCell"/>
</dbReference>
<dbReference type="GO" id="GO:0001726">
    <property type="term" value="C:ruffle"/>
    <property type="evidence" value="ECO:0000250"/>
    <property type="project" value="HGNC-UCL"/>
</dbReference>
<dbReference type="GO" id="GO:0030246">
    <property type="term" value="F:carbohydrate binding"/>
    <property type="evidence" value="ECO:0007669"/>
    <property type="project" value="UniProtKB-KW"/>
</dbReference>
<dbReference type="GO" id="GO:0005540">
    <property type="term" value="F:hyaluronic acid binding"/>
    <property type="evidence" value="ECO:0000250"/>
    <property type="project" value="HGNC-UCL"/>
</dbReference>
<dbReference type="CDD" id="cd03595">
    <property type="entry name" value="CLECT_chondrolectin_like"/>
    <property type="match status" value="1"/>
</dbReference>
<dbReference type="FunFam" id="3.10.100.10:FF:000006">
    <property type="entry name" value="Layilin b"/>
    <property type="match status" value="1"/>
</dbReference>
<dbReference type="Gene3D" id="3.10.100.10">
    <property type="entry name" value="Mannose-Binding Protein A, subunit A"/>
    <property type="match status" value="1"/>
</dbReference>
<dbReference type="IDEAL" id="IID50232"/>
<dbReference type="InterPro" id="IPR001304">
    <property type="entry name" value="C-type_lectin-like"/>
</dbReference>
<dbReference type="InterPro" id="IPR016186">
    <property type="entry name" value="C-type_lectin-like/link_sf"/>
</dbReference>
<dbReference type="InterPro" id="IPR051505">
    <property type="entry name" value="C-type_lectin_domain"/>
</dbReference>
<dbReference type="InterPro" id="IPR016187">
    <property type="entry name" value="CTDL_fold"/>
</dbReference>
<dbReference type="PANTHER" id="PTHR14789:SF1">
    <property type="entry name" value="CHONDROLECTIN"/>
    <property type="match status" value="1"/>
</dbReference>
<dbReference type="PANTHER" id="PTHR14789">
    <property type="entry name" value="CHONDROLECTIN VARIANT CHODLFDELTAE"/>
    <property type="match status" value="1"/>
</dbReference>
<dbReference type="Pfam" id="PF00059">
    <property type="entry name" value="Lectin_C"/>
    <property type="match status" value="1"/>
</dbReference>
<dbReference type="SMART" id="SM00034">
    <property type="entry name" value="CLECT"/>
    <property type="match status" value="1"/>
</dbReference>
<dbReference type="SUPFAM" id="SSF56436">
    <property type="entry name" value="C-type lectin-like"/>
    <property type="match status" value="1"/>
</dbReference>
<dbReference type="PROSITE" id="PS50041">
    <property type="entry name" value="C_TYPE_LECTIN_2"/>
    <property type="match status" value="1"/>
</dbReference>
<proteinExistence type="evidence at protein level"/>
<protein>
    <recommendedName>
        <fullName>Layilin</fullName>
    </recommendedName>
</protein>
<accession>Q8C351</accession>
<accession>E9QQ23</accession>
<accession>Q3TMU7</accession>
<feature type="signal peptide" evidence="2">
    <location>
        <begin position="1"/>
        <end position="24"/>
    </location>
</feature>
<feature type="chain" id="PRO_0000262509" description="Layilin">
    <location>
        <begin position="25"/>
        <end position="381"/>
    </location>
</feature>
<feature type="topological domain" description="Extracellular" evidence="2">
    <location>
        <begin position="25"/>
        <end position="235"/>
    </location>
</feature>
<feature type="transmembrane region" description="Helical" evidence="2">
    <location>
        <begin position="236"/>
        <end position="256"/>
    </location>
</feature>
<feature type="topological domain" description="Cytoplasmic" evidence="2">
    <location>
        <begin position="257"/>
        <end position="381"/>
    </location>
</feature>
<feature type="domain" description="C-type lectin" evidence="3">
    <location>
        <begin position="45"/>
        <end position="185"/>
    </location>
</feature>
<feature type="repeat" description="1-1">
    <location>
        <begin position="340"/>
        <end position="344"/>
    </location>
</feature>
<feature type="repeat" description="1-2">
    <location>
        <begin position="350"/>
        <end position="354"/>
    </location>
</feature>
<feature type="repeat" description="2-1">
    <location>
        <begin position="356"/>
        <end position="359"/>
    </location>
</feature>
<feature type="repeat" description="1-3">
    <location>
        <begin position="371"/>
        <end position="375"/>
    </location>
</feature>
<feature type="repeat" description="2-2">
    <location>
        <begin position="377"/>
        <end position="380"/>
    </location>
</feature>
<feature type="region of interest" description="Interaction with NF2" evidence="4">
    <location>
        <begin position="330"/>
        <end position="374"/>
    </location>
</feature>
<feature type="region of interest" description="Interaction with TLN1" evidence="1">
    <location>
        <begin position="337"/>
        <end position="381"/>
    </location>
</feature>
<feature type="region of interest" description="3 X 5 AA repeats of E-S-G-X-V">
    <location>
        <begin position="340"/>
        <end position="375"/>
    </location>
</feature>
<feature type="region of interest" description="2 X 4 AA repeats of N-X-I-Y">
    <location>
        <begin position="356"/>
        <end position="380"/>
    </location>
</feature>
<feature type="modified residue" description="Phosphoserine" evidence="7">
    <location>
        <position position="286"/>
    </location>
</feature>
<feature type="modified residue" description="Phosphoserine" evidence="7">
    <location>
        <position position="299"/>
    </location>
</feature>
<feature type="glycosylation site" description="N-linked (GlcNAc...) asparagine" evidence="2">
    <location>
        <position position="117"/>
    </location>
</feature>
<feature type="disulfide bond" evidence="3">
    <location>
        <begin position="71"/>
        <end position="184"/>
    </location>
</feature>
<feature type="disulfide bond" evidence="3">
    <location>
        <begin position="150"/>
        <end position="176"/>
    </location>
</feature>
<feature type="splice variant" id="VSP_021782" description="In isoform 2." evidence="5">
    <original>RN</original>
    <variation>SG</variation>
    <location>
        <begin position="136"/>
        <end position="137"/>
    </location>
</feature>
<feature type="splice variant" id="VSP_021783" description="In isoform 2." evidence="5">
    <location>
        <begin position="138"/>
        <end position="381"/>
    </location>
</feature>
<feature type="strand" evidence="8">
    <location>
        <begin position="372"/>
        <end position="376"/>
    </location>
</feature>
<keyword id="KW-0002">3D-structure</keyword>
<keyword id="KW-0025">Alternative splicing</keyword>
<keyword id="KW-1015">Disulfide bond</keyword>
<keyword id="KW-0325">Glycoprotein</keyword>
<keyword id="KW-0430">Lectin</keyword>
<keyword id="KW-0472">Membrane</keyword>
<keyword id="KW-0597">Phosphoprotein</keyword>
<keyword id="KW-1185">Reference proteome</keyword>
<keyword id="KW-0677">Repeat</keyword>
<keyword id="KW-0732">Signal</keyword>
<keyword id="KW-0812">Transmembrane</keyword>
<keyword id="KW-1133">Transmembrane helix</keyword>
<organism>
    <name type="scientific">Mus musculus</name>
    <name type="common">Mouse</name>
    <dbReference type="NCBI Taxonomy" id="10090"/>
    <lineage>
        <taxon>Eukaryota</taxon>
        <taxon>Metazoa</taxon>
        <taxon>Chordata</taxon>
        <taxon>Craniata</taxon>
        <taxon>Vertebrata</taxon>
        <taxon>Euteleostomi</taxon>
        <taxon>Mammalia</taxon>
        <taxon>Eutheria</taxon>
        <taxon>Euarchontoglires</taxon>
        <taxon>Glires</taxon>
        <taxon>Rodentia</taxon>
        <taxon>Myomorpha</taxon>
        <taxon>Muroidea</taxon>
        <taxon>Muridae</taxon>
        <taxon>Murinae</taxon>
        <taxon>Mus</taxon>
        <taxon>Mus</taxon>
    </lineage>
</organism>
<evidence type="ECO:0000250" key="1"/>
<evidence type="ECO:0000255" key="2"/>
<evidence type="ECO:0000255" key="3">
    <source>
        <dbReference type="PROSITE-ProRule" id="PRU00040"/>
    </source>
</evidence>
<evidence type="ECO:0000269" key="4">
    <source>
    </source>
</evidence>
<evidence type="ECO:0000303" key="5">
    <source>
    </source>
</evidence>
<evidence type="ECO:0000305" key="6"/>
<evidence type="ECO:0007744" key="7">
    <source>
    </source>
</evidence>
<evidence type="ECO:0007829" key="8">
    <source>
        <dbReference type="PDB" id="2K00"/>
    </source>
</evidence>
<reference key="1">
    <citation type="journal article" date="2005" name="Science">
        <title>The transcriptional landscape of the mammalian genome.</title>
        <authorList>
            <person name="Carninci P."/>
            <person name="Kasukawa T."/>
            <person name="Katayama S."/>
            <person name="Gough J."/>
            <person name="Frith M.C."/>
            <person name="Maeda N."/>
            <person name="Oyama R."/>
            <person name="Ravasi T."/>
            <person name="Lenhard B."/>
            <person name="Wells C."/>
            <person name="Kodzius R."/>
            <person name="Shimokawa K."/>
            <person name="Bajic V.B."/>
            <person name="Brenner S.E."/>
            <person name="Batalov S."/>
            <person name="Forrest A.R."/>
            <person name="Zavolan M."/>
            <person name="Davis M.J."/>
            <person name="Wilming L.G."/>
            <person name="Aidinis V."/>
            <person name="Allen J.E."/>
            <person name="Ambesi-Impiombato A."/>
            <person name="Apweiler R."/>
            <person name="Aturaliya R.N."/>
            <person name="Bailey T.L."/>
            <person name="Bansal M."/>
            <person name="Baxter L."/>
            <person name="Beisel K.W."/>
            <person name="Bersano T."/>
            <person name="Bono H."/>
            <person name="Chalk A.M."/>
            <person name="Chiu K.P."/>
            <person name="Choudhary V."/>
            <person name="Christoffels A."/>
            <person name="Clutterbuck D.R."/>
            <person name="Crowe M.L."/>
            <person name="Dalla E."/>
            <person name="Dalrymple B.P."/>
            <person name="de Bono B."/>
            <person name="Della Gatta G."/>
            <person name="di Bernardo D."/>
            <person name="Down T."/>
            <person name="Engstrom P."/>
            <person name="Fagiolini M."/>
            <person name="Faulkner G."/>
            <person name="Fletcher C.F."/>
            <person name="Fukushima T."/>
            <person name="Furuno M."/>
            <person name="Futaki S."/>
            <person name="Gariboldi M."/>
            <person name="Georgii-Hemming P."/>
            <person name="Gingeras T.R."/>
            <person name="Gojobori T."/>
            <person name="Green R.E."/>
            <person name="Gustincich S."/>
            <person name="Harbers M."/>
            <person name="Hayashi Y."/>
            <person name="Hensch T.K."/>
            <person name="Hirokawa N."/>
            <person name="Hill D."/>
            <person name="Huminiecki L."/>
            <person name="Iacono M."/>
            <person name="Ikeo K."/>
            <person name="Iwama A."/>
            <person name="Ishikawa T."/>
            <person name="Jakt M."/>
            <person name="Kanapin A."/>
            <person name="Katoh M."/>
            <person name="Kawasawa Y."/>
            <person name="Kelso J."/>
            <person name="Kitamura H."/>
            <person name="Kitano H."/>
            <person name="Kollias G."/>
            <person name="Krishnan S.P."/>
            <person name="Kruger A."/>
            <person name="Kummerfeld S.K."/>
            <person name="Kurochkin I.V."/>
            <person name="Lareau L.F."/>
            <person name="Lazarevic D."/>
            <person name="Lipovich L."/>
            <person name="Liu J."/>
            <person name="Liuni S."/>
            <person name="McWilliam S."/>
            <person name="Madan Babu M."/>
            <person name="Madera M."/>
            <person name="Marchionni L."/>
            <person name="Matsuda H."/>
            <person name="Matsuzawa S."/>
            <person name="Miki H."/>
            <person name="Mignone F."/>
            <person name="Miyake S."/>
            <person name="Morris K."/>
            <person name="Mottagui-Tabar S."/>
            <person name="Mulder N."/>
            <person name="Nakano N."/>
            <person name="Nakauchi H."/>
            <person name="Ng P."/>
            <person name="Nilsson R."/>
            <person name="Nishiguchi S."/>
            <person name="Nishikawa S."/>
            <person name="Nori F."/>
            <person name="Ohara O."/>
            <person name="Okazaki Y."/>
            <person name="Orlando V."/>
            <person name="Pang K.C."/>
            <person name="Pavan W.J."/>
            <person name="Pavesi G."/>
            <person name="Pesole G."/>
            <person name="Petrovsky N."/>
            <person name="Piazza S."/>
            <person name="Reed J."/>
            <person name="Reid J.F."/>
            <person name="Ring B.Z."/>
            <person name="Ringwald M."/>
            <person name="Rost B."/>
            <person name="Ruan Y."/>
            <person name="Salzberg S.L."/>
            <person name="Sandelin A."/>
            <person name="Schneider C."/>
            <person name="Schoenbach C."/>
            <person name="Sekiguchi K."/>
            <person name="Semple C.A."/>
            <person name="Seno S."/>
            <person name="Sessa L."/>
            <person name="Sheng Y."/>
            <person name="Shibata Y."/>
            <person name="Shimada H."/>
            <person name="Shimada K."/>
            <person name="Silva D."/>
            <person name="Sinclair B."/>
            <person name="Sperling S."/>
            <person name="Stupka E."/>
            <person name="Sugiura K."/>
            <person name="Sultana R."/>
            <person name="Takenaka Y."/>
            <person name="Taki K."/>
            <person name="Tammoja K."/>
            <person name="Tan S.L."/>
            <person name="Tang S."/>
            <person name="Taylor M.S."/>
            <person name="Tegner J."/>
            <person name="Teichmann S.A."/>
            <person name="Ueda H.R."/>
            <person name="van Nimwegen E."/>
            <person name="Verardo R."/>
            <person name="Wei C.L."/>
            <person name="Yagi K."/>
            <person name="Yamanishi H."/>
            <person name="Zabarovsky E."/>
            <person name="Zhu S."/>
            <person name="Zimmer A."/>
            <person name="Hide W."/>
            <person name="Bult C."/>
            <person name="Grimmond S.M."/>
            <person name="Teasdale R.D."/>
            <person name="Liu E.T."/>
            <person name="Brusic V."/>
            <person name="Quackenbush J."/>
            <person name="Wahlestedt C."/>
            <person name="Mattick J.S."/>
            <person name="Hume D.A."/>
            <person name="Kai C."/>
            <person name="Sasaki D."/>
            <person name="Tomaru Y."/>
            <person name="Fukuda S."/>
            <person name="Kanamori-Katayama M."/>
            <person name="Suzuki M."/>
            <person name="Aoki J."/>
            <person name="Arakawa T."/>
            <person name="Iida J."/>
            <person name="Imamura K."/>
            <person name="Itoh M."/>
            <person name="Kato T."/>
            <person name="Kawaji H."/>
            <person name="Kawagashira N."/>
            <person name="Kawashima T."/>
            <person name="Kojima M."/>
            <person name="Kondo S."/>
            <person name="Konno H."/>
            <person name="Nakano K."/>
            <person name="Ninomiya N."/>
            <person name="Nishio T."/>
            <person name="Okada M."/>
            <person name="Plessy C."/>
            <person name="Shibata K."/>
            <person name="Shiraki T."/>
            <person name="Suzuki S."/>
            <person name="Tagami M."/>
            <person name="Waki K."/>
            <person name="Watahiki A."/>
            <person name="Okamura-Oho Y."/>
            <person name="Suzuki H."/>
            <person name="Kawai J."/>
            <person name="Hayashizaki Y."/>
        </authorList>
    </citation>
    <scope>NUCLEOTIDE SEQUENCE [LARGE SCALE MRNA] (ISOFORM 2)</scope>
    <scope>NUCLEOTIDE SEQUENCE [LARGE SCALE MRNA] OF 1-212 (ISOFORM 1)</scope>
    <source>
        <strain>C57BL/6J</strain>
        <tissue>Lung</tissue>
        <tissue>Medulla oblongata</tissue>
    </source>
</reference>
<reference key="2">
    <citation type="journal article" date="2009" name="PLoS Biol.">
        <title>Lineage-specific biology revealed by a finished genome assembly of the mouse.</title>
        <authorList>
            <person name="Church D.M."/>
            <person name="Goodstadt L."/>
            <person name="Hillier L.W."/>
            <person name="Zody M.C."/>
            <person name="Goldstein S."/>
            <person name="She X."/>
            <person name="Bult C.J."/>
            <person name="Agarwala R."/>
            <person name="Cherry J.L."/>
            <person name="DiCuccio M."/>
            <person name="Hlavina W."/>
            <person name="Kapustin Y."/>
            <person name="Meric P."/>
            <person name="Maglott D."/>
            <person name="Birtle Z."/>
            <person name="Marques A.C."/>
            <person name="Graves T."/>
            <person name="Zhou S."/>
            <person name="Teague B."/>
            <person name="Potamousis K."/>
            <person name="Churas C."/>
            <person name="Place M."/>
            <person name="Herschleb J."/>
            <person name="Runnheim R."/>
            <person name="Forrest D."/>
            <person name="Amos-Landgraf J."/>
            <person name="Schwartz D.C."/>
            <person name="Cheng Z."/>
            <person name="Lindblad-Toh K."/>
            <person name="Eichler E.E."/>
            <person name="Ponting C.P."/>
        </authorList>
    </citation>
    <scope>NUCLEOTIDE SEQUENCE [LARGE SCALE GENOMIC DNA]</scope>
    <source>
        <strain>C57BL/6J</strain>
    </source>
</reference>
<reference key="3">
    <citation type="journal article" date="2005" name="Exp. Cell Res.">
        <title>Layilin, a cell surface hyaluronan receptor, interacts with merlin and radixin.</title>
        <authorList>
            <person name="Bono P."/>
            <person name="Cordero E."/>
            <person name="Johnson K."/>
            <person name="Borowsky M."/>
            <person name="Ramesh V."/>
            <person name="Jacks T."/>
            <person name="Hynes R.O."/>
        </authorList>
    </citation>
    <scope>INTERACTION WITH NF2 AND RDX</scope>
</reference>
<reference key="4">
    <citation type="journal article" date="2009" name="Immunity">
        <title>The phagosomal proteome in interferon-gamma-activated macrophages.</title>
        <authorList>
            <person name="Trost M."/>
            <person name="English L."/>
            <person name="Lemieux S."/>
            <person name="Courcelles M."/>
            <person name="Desjardins M."/>
            <person name="Thibault P."/>
        </authorList>
    </citation>
    <scope>PHOSPHORYLATION [LARGE SCALE ANALYSIS] AT SER-286 AND SER-299</scope>
    <scope>IDENTIFICATION BY MASS SPECTROMETRY [LARGE SCALE ANALYSIS]</scope>
</reference>
<sequence length="381" mass="43269">MQPGAALQAMLLAVLLAKPRDSKGRLLSASDLDPRGGQLVCRGGTRRPCYKVIYFHDAFQRLNFEEAKETCMEDGGQLVSIETEDEQRLIEKFIENLLASDGDFWIGLKRLEEKQSNNTACQDLYAWTDGSTSQFRNWYVDEPSCGSEVCVVMYHQPSAPPGIGGSYMFQWNDDRCNMKNNFICKYHDDKPSTTPSIWPGGEATEPATPLLPEETQKEDTKETFKERREAALNLAYILIPSIPLFLLLVVTSAVCWVWICRRKREQTDPSTKEQHTIWPTPRQENSPNLDVYNVIRKQSEADLAEPRPDLKNISFRVCSGEAMPDDMSCDYENIAVNPSESGFVTLASMESGFVTNDIYEFSPDRMGRSKESGWVENEIYY</sequence>
<name>LAYN_MOUSE</name>
<gene>
    <name type="primary">Layn</name>
</gene>